<name>ORF3_TTVT1</name>
<sequence length="243" mass="27373">MSDEGYRELVESKSAPTTPGPWSPDRERWKRHEAAWKQHCSWSHGLWCHCHDWTRHLKKETRECGSGTESGEDPAVSFDLVDDAAMLAAAGDAEPGAAGGGGVEVPKGPAPTLTTHAIRDLNQYKSQTQPPPLETSYTPGMWMLPELYQPQNSNNSWKDLVTGNRNRNRDPPRPSYLRERRRRSSTTTARRPRAMTSTPETPRKRRRTTRTRAGFERALTSLLEGLGVSEDSDSSSERDCWPF</sequence>
<dbReference type="EMBL" id="AB076002">
    <property type="protein sequence ID" value="BAB90849.1"/>
    <property type="molecule type" value="Genomic_DNA"/>
</dbReference>
<dbReference type="RefSeq" id="YP_003587832.1">
    <property type="nucleotide sequence ID" value="NC_014071.1"/>
</dbReference>
<dbReference type="KEGG" id="vg:9086579"/>
<dbReference type="Proteomes" id="UP000001295">
    <property type="component" value="Segment"/>
</dbReference>
<accession>Q8QVL8</accession>
<keyword id="KW-1185">Reference proteome</keyword>
<organismHost>
    <name type="scientific">Canis lupus familiaris</name>
    <name type="common">Dog</name>
    <name type="synonym">Canis familiaris</name>
    <dbReference type="NCBI Taxonomy" id="9615"/>
</organismHost>
<protein>
    <recommendedName>
        <fullName>Uncharacterized ORF2 protein</fullName>
    </recommendedName>
</protein>
<feature type="chain" id="PRO_0000404293" description="Uncharacterized ORF2 protein">
    <location>
        <begin position="1"/>
        <end position="243"/>
    </location>
</feature>
<feature type="region of interest" description="Disordered" evidence="1">
    <location>
        <begin position="1"/>
        <end position="26"/>
    </location>
</feature>
<feature type="region of interest" description="Disordered" evidence="1">
    <location>
        <begin position="146"/>
        <end position="243"/>
    </location>
</feature>
<feature type="compositionally biased region" description="Basic and acidic residues" evidence="1">
    <location>
        <begin position="1"/>
        <end position="11"/>
    </location>
</feature>
<feature type="compositionally biased region" description="Basic and acidic residues" evidence="1">
    <location>
        <begin position="167"/>
        <end position="178"/>
    </location>
</feature>
<feature type="compositionally biased region" description="Low complexity" evidence="1">
    <location>
        <begin position="185"/>
        <end position="200"/>
    </location>
</feature>
<reference key="1">
    <citation type="journal article" date="2002" name="J. Gen. Virol.">
        <title>Genomic characterization of TT viruses (TTVs) in pigs, cats and dogs and their relatedness with species-specific TTVs in primates and tupaias.</title>
        <authorList>
            <person name="Okamoto H."/>
            <person name="Takahashi M."/>
            <person name="Nishizawa T."/>
            <person name="Tawara A."/>
            <person name="Fukai K."/>
            <person name="Muramatsu U."/>
            <person name="Naito Y."/>
            <person name="Yoshikawa A."/>
        </authorList>
    </citation>
    <scope>NUCLEOTIDE SEQUENCE [GENOMIC DNA]</scope>
</reference>
<organism>
    <name type="scientific">Torque teno canis virus (isolate Cf-TTV10)</name>
    <dbReference type="NCBI Taxonomy" id="766189"/>
    <lineage>
        <taxon>Viruses</taxon>
        <taxon>Viruses incertae sedis</taxon>
        <taxon>Anelloviridae</taxon>
        <taxon>Thetatorquevirus</taxon>
        <taxon>Thetatorquevirus canid1</taxon>
    </lineage>
</organism>
<proteinExistence type="predicted"/>
<evidence type="ECO:0000256" key="1">
    <source>
        <dbReference type="SAM" id="MobiDB-lite"/>
    </source>
</evidence>
<gene>
    <name type="ORF">ORF1</name>
</gene>